<comment type="function">
    <text evidence="5 6 7">Involved in growth cone guidance through its role in axonal repulsion (PubMed:15282266, PubMed:8269517). Function in neurons is essential for adult survival, motor neuron survival, and is important for climbing behavior and activity (PubMed:37041188).</text>
</comment>
<comment type="subcellular location">
    <subcellularLocation>
        <location evidence="5 7">Cell membrane</location>
        <topology evidence="1">Multi-pass membrane protein</topology>
    </subcellularLocation>
</comment>
<comment type="tissue specificity">
    <text evidence="7">Expressed by subsets of neurons and muscles.</text>
</comment>
<comment type="developmental stage">
    <text evidence="7">Expression begins around stage 10, primarily in the developing CNS. In stage 16 embryos, it is expressed at highest levels throughout the CNS, and weak expression is seen in portions of the peripheral nervous system, most clearly in the lateral sensory clusters.</text>
</comment>
<comment type="disruption phenotype">
    <text evidence="6">RNAi-mediated knockdown in the neurons of adult males, significantly reduces survival to 30 percent (PubMed:37041188). Adult survival begins to decrease from approximately day 9 post eclosion (PubMed:37041188). Pan-neuronal or glutamatergic neuron-specific RNAi-mediated knockdown decreases adult climbing behavior (PubMed:37041188). Glutamatergic neuron-specific RNAi-mediated knockdown also decreases activity throughout the day (during both light and dark cycles) and results in a significant loss of motor neurons in each thoracic cluster (T1, T2, T3) (PubMed:37041188).</text>
</comment>
<comment type="similarity">
    <text evidence="8">Belongs to the semaphorin family.</text>
</comment>
<comment type="sequence caution" evidence="8">
    <conflict type="frameshift">
        <sequence resource="EMBL-CDS" id="AAA88789"/>
    </conflict>
</comment>
<comment type="sequence caution" evidence="8">
    <conflict type="miscellaneous discrepancy">
        <sequence resource="EMBL-CDS" id="AAA88789"/>
    </conflict>
    <text>Intron retention.</text>
</comment>
<comment type="sequence caution" evidence="8">
    <conflict type="miscellaneous discrepancy">
        <sequence resource="EMBL-CDS" id="AAM29460"/>
    </conflict>
    <text>Intron retention.</text>
</comment>
<proteinExistence type="evidence at protein level"/>
<organism>
    <name type="scientific">Drosophila melanogaster</name>
    <name type="common">Fruit fly</name>
    <dbReference type="NCBI Taxonomy" id="7227"/>
    <lineage>
        <taxon>Eukaryota</taxon>
        <taxon>Metazoa</taxon>
        <taxon>Ecdysozoa</taxon>
        <taxon>Arthropoda</taxon>
        <taxon>Hexapoda</taxon>
        <taxon>Insecta</taxon>
        <taxon>Pterygota</taxon>
        <taxon>Neoptera</taxon>
        <taxon>Endopterygota</taxon>
        <taxon>Diptera</taxon>
        <taxon>Brachycera</taxon>
        <taxon>Muscomorpha</taxon>
        <taxon>Ephydroidea</taxon>
        <taxon>Drosophilidae</taxon>
        <taxon>Drosophila</taxon>
        <taxon>Sophophora</taxon>
    </lineage>
</organism>
<dbReference type="EMBL" id="L26082">
    <property type="protein sequence ID" value="AAA88789.1"/>
    <property type="status" value="ALT_FRAME"/>
    <property type="molecule type" value="mRNA"/>
</dbReference>
<dbReference type="EMBL" id="AE014134">
    <property type="protein sequence ID" value="AAF52696.2"/>
    <property type="molecule type" value="Genomic_DNA"/>
</dbReference>
<dbReference type="EMBL" id="AY113455">
    <property type="protein sequence ID" value="AAM29460.1"/>
    <property type="status" value="ALT_SEQ"/>
    <property type="molecule type" value="mRNA"/>
</dbReference>
<dbReference type="RefSeq" id="NP_723407.2">
    <property type="nucleotide sequence ID" value="NM_164830.5"/>
</dbReference>
<dbReference type="PDB" id="6QP9">
    <property type="method" value="X-ray"/>
    <property type="resolution" value="3.60 A"/>
    <property type="chains" value="A/B=80-603"/>
</dbReference>
<dbReference type="PDBsum" id="6QP9"/>
<dbReference type="SMR" id="Q24322"/>
<dbReference type="BioGRID" id="60311">
    <property type="interactions" value="151"/>
</dbReference>
<dbReference type="FunCoup" id="Q24322">
    <property type="interactions" value="129"/>
</dbReference>
<dbReference type="IntAct" id="Q24322">
    <property type="interactions" value="121"/>
</dbReference>
<dbReference type="STRING" id="7227.FBpp0302962"/>
<dbReference type="GlyCosmos" id="Q24322">
    <property type="glycosylation" value="7 sites, No reported glycans"/>
</dbReference>
<dbReference type="GlyGen" id="Q24322">
    <property type="glycosylation" value="7 sites"/>
</dbReference>
<dbReference type="PaxDb" id="7227-FBpp0292880"/>
<dbReference type="EnsemblMetazoa" id="FBtr0079691">
    <property type="protein sequence ID" value="FBpp0079302"/>
    <property type="gene ID" value="FBgn0011259"/>
</dbReference>
<dbReference type="GeneID" id="34192"/>
<dbReference type="KEGG" id="dme:Dmel_CG18405"/>
<dbReference type="AGR" id="FB:FBgn0011259"/>
<dbReference type="CTD" id="34192"/>
<dbReference type="FlyBase" id="FBgn0011259">
    <property type="gene designation" value="Sema1a"/>
</dbReference>
<dbReference type="VEuPathDB" id="VectorBase:FBgn0011259"/>
<dbReference type="eggNOG" id="KOG3611">
    <property type="taxonomic scope" value="Eukaryota"/>
</dbReference>
<dbReference type="GeneTree" id="ENSGT00940000167882"/>
<dbReference type="InParanoid" id="Q24322"/>
<dbReference type="OrthoDB" id="9988752at2759"/>
<dbReference type="PhylomeDB" id="Q24322"/>
<dbReference type="Reactome" id="R-DME-399954">
    <property type="pathway name" value="Sema3A PAK dependent Axon repulsion"/>
</dbReference>
<dbReference type="Reactome" id="R-DME-399955">
    <property type="pathway name" value="SEMA3A-Plexin repulsion signaling by inhibiting Integrin adhesion"/>
</dbReference>
<dbReference type="Reactome" id="R-DME-399956">
    <property type="pathway name" value="CRMPs in Sema3A signaling"/>
</dbReference>
<dbReference type="Reactome" id="R-DME-416572">
    <property type="pathway name" value="Sema4D induced cell migration and growth-cone collapse"/>
</dbReference>
<dbReference type="Reactome" id="R-DME-416700">
    <property type="pathway name" value="Other semaphorin interactions"/>
</dbReference>
<dbReference type="SignaLink" id="Q24322"/>
<dbReference type="BioGRID-ORCS" id="34192">
    <property type="hits" value="0 hits in 3 CRISPR screens"/>
</dbReference>
<dbReference type="ChiTaRS" id="Sema-1a">
    <property type="organism name" value="fly"/>
</dbReference>
<dbReference type="GenomeRNAi" id="34192"/>
<dbReference type="PRO" id="PR:Q24322"/>
<dbReference type="Proteomes" id="UP000000803">
    <property type="component" value="Chromosome 2L"/>
</dbReference>
<dbReference type="Bgee" id="FBgn0011259">
    <property type="expression patterns" value="Expressed in mechanosensory neuron (Drosophila) in haltere and 274 other cell types or tissues"/>
</dbReference>
<dbReference type="ExpressionAtlas" id="Q24322">
    <property type="expression patterns" value="baseline and differential"/>
</dbReference>
<dbReference type="GO" id="GO:0016020">
    <property type="term" value="C:membrane"/>
    <property type="evidence" value="ECO:0000250"/>
    <property type="project" value="FlyBase"/>
</dbReference>
<dbReference type="GO" id="GO:0005886">
    <property type="term" value="C:plasma membrane"/>
    <property type="evidence" value="ECO:0000318"/>
    <property type="project" value="GO_Central"/>
</dbReference>
<dbReference type="GO" id="GO:0045499">
    <property type="term" value="F:chemorepellent activity"/>
    <property type="evidence" value="ECO:0000318"/>
    <property type="project" value="GO_Central"/>
</dbReference>
<dbReference type="GO" id="GO:0008201">
    <property type="term" value="F:heparin binding"/>
    <property type="evidence" value="ECO:0000314"/>
    <property type="project" value="FlyBase"/>
</dbReference>
<dbReference type="GO" id="GO:0030215">
    <property type="term" value="F:semaphorin receptor binding"/>
    <property type="evidence" value="ECO:0000318"/>
    <property type="project" value="GO_Central"/>
</dbReference>
<dbReference type="GO" id="GO:0007411">
    <property type="term" value="P:axon guidance"/>
    <property type="evidence" value="ECO:0000314"/>
    <property type="project" value="FlyBase"/>
</dbReference>
<dbReference type="GO" id="GO:0016199">
    <property type="term" value="P:axon midline choice point recognition"/>
    <property type="evidence" value="ECO:0000315"/>
    <property type="project" value="FlyBase"/>
</dbReference>
<dbReference type="GO" id="GO:0048813">
    <property type="term" value="P:dendrite morphogenesis"/>
    <property type="evidence" value="ECO:0000315"/>
    <property type="project" value="FlyBase"/>
</dbReference>
<dbReference type="GO" id="GO:0008045">
    <property type="term" value="P:motor neuron axon guidance"/>
    <property type="evidence" value="ECO:0000315"/>
    <property type="project" value="FlyBase"/>
</dbReference>
<dbReference type="GO" id="GO:0050919">
    <property type="term" value="P:negative chemotaxis"/>
    <property type="evidence" value="ECO:0000318"/>
    <property type="project" value="GO_Central"/>
</dbReference>
<dbReference type="GO" id="GO:0045792">
    <property type="term" value="P:negative regulation of cell size"/>
    <property type="evidence" value="ECO:0000315"/>
    <property type="project" value="FlyBase"/>
</dbReference>
<dbReference type="GO" id="GO:0072499">
    <property type="term" value="P:photoreceptor cell axon guidance"/>
    <property type="evidence" value="ECO:0000316"/>
    <property type="project" value="FlyBase"/>
</dbReference>
<dbReference type="GO" id="GO:0030335">
    <property type="term" value="P:positive regulation of cell migration"/>
    <property type="evidence" value="ECO:0000318"/>
    <property type="project" value="GO_Central"/>
</dbReference>
<dbReference type="GO" id="GO:0071526">
    <property type="term" value="P:semaphorin-plexin signaling pathway"/>
    <property type="evidence" value="ECO:0000316"/>
    <property type="project" value="FlyBase"/>
</dbReference>
<dbReference type="GO" id="GO:0007416">
    <property type="term" value="P:synapse assembly"/>
    <property type="evidence" value="ECO:0000315"/>
    <property type="project" value="FlyBase"/>
</dbReference>
<dbReference type="GO" id="GO:0008039">
    <property type="term" value="P:synaptic target recognition"/>
    <property type="evidence" value="ECO:0000315"/>
    <property type="project" value="FlyBase"/>
</dbReference>
<dbReference type="CDD" id="cd11237">
    <property type="entry name" value="Sema_1A"/>
    <property type="match status" value="1"/>
</dbReference>
<dbReference type="FunFam" id="3.30.1680.10:FF:000016">
    <property type="entry name" value="Putative Semaphorin-6B"/>
    <property type="match status" value="1"/>
</dbReference>
<dbReference type="FunFam" id="2.130.10.10:FF:000346">
    <property type="entry name" value="Sema-1a, isoform D"/>
    <property type="match status" value="1"/>
</dbReference>
<dbReference type="Gene3D" id="3.30.1680.10">
    <property type="entry name" value="ligand-binding face of the semaphorins, domain 2"/>
    <property type="match status" value="1"/>
</dbReference>
<dbReference type="Gene3D" id="2.130.10.10">
    <property type="entry name" value="YVTN repeat-like/Quinoprotein amine dehydrogenase"/>
    <property type="match status" value="1"/>
</dbReference>
<dbReference type="InterPro" id="IPR002165">
    <property type="entry name" value="Plexin_repeat"/>
</dbReference>
<dbReference type="InterPro" id="IPR016201">
    <property type="entry name" value="PSI"/>
</dbReference>
<dbReference type="InterPro" id="IPR042068">
    <property type="entry name" value="SEM1A_sema_dom"/>
</dbReference>
<dbReference type="InterPro" id="IPR001627">
    <property type="entry name" value="Semap_dom"/>
</dbReference>
<dbReference type="InterPro" id="IPR036352">
    <property type="entry name" value="Semap_dom_sf"/>
</dbReference>
<dbReference type="InterPro" id="IPR027231">
    <property type="entry name" value="Semaphorin"/>
</dbReference>
<dbReference type="InterPro" id="IPR015943">
    <property type="entry name" value="WD40/YVTN_repeat-like_dom_sf"/>
</dbReference>
<dbReference type="PANTHER" id="PTHR11036">
    <property type="entry name" value="SEMAPHORIN"/>
    <property type="match status" value="1"/>
</dbReference>
<dbReference type="PANTHER" id="PTHR11036:SF127">
    <property type="entry name" value="SEMAPHORIN-1A"/>
    <property type="match status" value="1"/>
</dbReference>
<dbReference type="Pfam" id="PF01437">
    <property type="entry name" value="PSI"/>
    <property type="match status" value="1"/>
</dbReference>
<dbReference type="Pfam" id="PF01403">
    <property type="entry name" value="Sema"/>
    <property type="match status" value="1"/>
</dbReference>
<dbReference type="SMART" id="SM00423">
    <property type="entry name" value="PSI"/>
    <property type="match status" value="1"/>
</dbReference>
<dbReference type="SMART" id="SM00630">
    <property type="entry name" value="Sema"/>
    <property type="match status" value="1"/>
</dbReference>
<dbReference type="SUPFAM" id="SSF103575">
    <property type="entry name" value="Plexin repeat"/>
    <property type="match status" value="1"/>
</dbReference>
<dbReference type="SUPFAM" id="SSF101912">
    <property type="entry name" value="Sema domain"/>
    <property type="match status" value="1"/>
</dbReference>
<dbReference type="PROSITE" id="PS51004">
    <property type="entry name" value="SEMA"/>
    <property type="match status" value="1"/>
</dbReference>
<keyword id="KW-0002">3D-structure</keyword>
<keyword id="KW-1003">Cell membrane</keyword>
<keyword id="KW-0217">Developmental protein</keyword>
<keyword id="KW-0221">Differentiation</keyword>
<keyword id="KW-1015">Disulfide bond</keyword>
<keyword id="KW-0325">Glycoprotein</keyword>
<keyword id="KW-0472">Membrane</keyword>
<keyword id="KW-0524">Neurogenesis</keyword>
<keyword id="KW-1185">Reference proteome</keyword>
<keyword id="KW-0812">Transmembrane</keyword>
<keyword id="KW-1133">Transmembrane helix</keyword>
<name>SEM1A_DROME</name>
<gene>
    <name evidence="10" type="primary">Sema1a</name>
    <name evidence="10" type="synonym">Dsema-I</name>
    <name evidence="10" type="synonym">Sema-1a</name>
    <name evidence="10" type="ORF">CG18405</name>
</gene>
<protein>
    <recommendedName>
        <fullName>Semaphorin-1A</fullName>
    </recommendedName>
    <alternativeName>
        <fullName>Semaphorin-I</fullName>
        <shortName>Sema I</shortName>
    </alternativeName>
</protein>
<accession>Q24322</accession>
<accession>Q8MYZ9</accession>
<feature type="chain" id="PRO_0000032297" description="Semaphorin-1A">
    <location>
        <begin position="1"/>
        <end position="899"/>
    </location>
</feature>
<feature type="topological domain" description="Cytoplasmic" evidence="1">
    <location>
        <begin position="1"/>
        <end position="40"/>
    </location>
</feature>
<feature type="transmembrane region" description="Helical" evidence="1">
    <location>
        <begin position="41"/>
        <end position="61"/>
    </location>
</feature>
<feature type="topological domain" description="Extracellular" evidence="1">
    <location>
        <begin position="62"/>
        <end position="657"/>
    </location>
</feature>
<feature type="transmembrane region" description="Helical" evidence="1">
    <location>
        <begin position="658"/>
        <end position="678"/>
    </location>
</feature>
<feature type="topological domain" description="Cytoplasmic" evidence="1">
    <location>
        <begin position="679"/>
        <end position="899"/>
    </location>
</feature>
<feature type="domain" description="Sema" evidence="2">
    <location>
        <begin position="74"/>
        <end position="543"/>
    </location>
</feature>
<feature type="region of interest" description="Disordered" evidence="4">
    <location>
        <begin position="1"/>
        <end position="24"/>
    </location>
</feature>
<feature type="region of interest" description="Disordered" evidence="4">
    <location>
        <begin position="735"/>
        <end position="766"/>
    </location>
</feature>
<feature type="region of interest" description="Disordered" evidence="4">
    <location>
        <begin position="798"/>
        <end position="899"/>
    </location>
</feature>
<feature type="compositionally biased region" description="Low complexity" evidence="4">
    <location>
        <begin position="1"/>
        <end position="20"/>
    </location>
</feature>
<feature type="compositionally biased region" description="Polar residues" evidence="4">
    <location>
        <begin position="809"/>
        <end position="827"/>
    </location>
</feature>
<feature type="compositionally biased region" description="Basic residues" evidence="4">
    <location>
        <begin position="828"/>
        <end position="837"/>
    </location>
</feature>
<feature type="compositionally biased region" description="Low complexity" evidence="4">
    <location>
        <begin position="847"/>
        <end position="876"/>
    </location>
</feature>
<feature type="glycosylation site" description="N-linked (GlcNAc...) asparagine" evidence="3">
    <location>
        <position position="63"/>
    </location>
</feature>
<feature type="glycosylation site" description="N-linked (GlcNAc...) asparagine" evidence="3">
    <location>
        <position position="90"/>
    </location>
</feature>
<feature type="glycosylation site" description="N-linked (GlcNAc...) asparagine" evidence="3">
    <location>
        <position position="117"/>
    </location>
</feature>
<feature type="glycosylation site" description="N-linked (GlcNAc...) asparagine" evidence="3">
    <location>
        <position position="187"/>
    </location>
</feature>
<feature type="glycosylation site" description="N-linked (GlcNAc...) asparagine" evidence="3">
    <location>
        <position position="207"/>
    </location>
</feature>
<feature type="glycosylation site" description="N-linked (GlcNAc...) asparagine" evidence="3">
    <location>
        <position position="311"/>
    </location>
</feature>
<feature type="glycosylation site" description="N-linked (GlcNAc...) asparagine" evidence="3">
    <location>
        <position position="404"/>
    </location>
</feature>
<feature type="disulfide bond" evidence="2">
    <location>
        <begin position="141"/>
        <end position="151"/>
    </location>
</feature>
<feature type="disulfide bond" evidence="2">
    <location>
        <begin position="169"/>
        <end position="178"/>
    </location>
</feature>
<feature type="disulfide bond" evidence="2">
    <location>
        <begin position="288"/>
        <end position="402"/>
    </location>
</feature>
<feature type="disulfide bond" evidence="2">
    <location>
        <begin position="312"/>
        <end position="361"/>
    </location>
</feature>
<feature type="sequence conflict" description="In Ref. 1; AAA88789." evidence="8" ref="1">
    <original>A</original>
    <variation>V</variation>
    <location>
        <position position="14"/>
    </location>
</feature>
<sequence>MLNSHNTNHNNNSASNSNYNKGHKMHLKSATAKATIMKHKLSKFYGYGWMQVFLLLTVLVIGNQSAWQENIRPKLYVELGPEDVLKFVGNESVVDHFKLVTKDGNSLLIGARNTVFNLSIHDLVEQQRLVWTSPEDDTKMCLVKGKDEEACQNYIRIMVVPSPGRLFVCGTNSFRPMCNTYIISDSNYTLEATKNGQAVCPYDPRHNSTSVLADNELYSGTVADFSGSDPIIYREPLQTEQYDSLSLNAPNFVSSFTQGDFVYFFFRETAVEFINCGKAIYSRVARVCKWDKGGPHRFRNRWTSFLKSRLNCSIPGDYPFYFNEIQSASNLVEGQYGSMSSKLIYGVFNTPSNSIPGSAVCAFALQDIADTFEGQFKEQTGINSNWLPVNNAKVPDPRPGSCHNDSRALPDPTLNFIKTHSLMDENVPAFFSQPILVRTSTIYRFTQIAVDAQIKTPGGKTYDVIFVGTDHGKIIKSVNAESADSADKVTSVVIEEIDVLTKSEPIRNLEIVRTMQYDQPKDGSYDDGKLIIVTDSQVVAIQLHRCHNDKITSCSECVALQDPYCAWDKIAGKCRSHGAPRWLEENYFYQNVATGQHAACPSGKINSKDANAGEQKGFRNDMDLLDSRRQSKDQEIIDNIDKNFEDIINAQYTVETLVMAVLAGSIFSLLVGFFTGYFCGRRCHKDEDDNLPYPDTEYEYFEQRQNVNSFPSSCRIQQEPKLLPQVEEVTYAEPVLLPQPPPPNKMHSPKNTLRKPPMHQMHQGPNSETLFQFQPDGYNTQQSYRGRDNFGTLRSHQVMGDNYRRGDGFSTTRSVKKAVNNTNTRNRSLGRARRQPPRHGIVTQHRSNSPQQQQQQSQQPHSSSGSSPVMSNSSSSPAPPSSSPSPQESPKNCSYIYRD</sequence>
<reference key="1">
    <citation type="journal article" date="1993" name="Cell">
        <title>The semaphorin genes encode a family of transmembrane and secreted growth cone guidance molecules.</title>
        <authorList>
            <person name="Kolodkin A.L."/>
            <person name="Matthes D.J."/>
            <person name="Goodman C.S."/>
        </authorList>
    </citation>
    <scope>NUCLEOTIDE SEQUENCE [MRNA]</scope>
    <scope>FUNCTION</scope>
    <scope>TISSUE SPECIFICITY</scope>
    <scope>DEVELOPMENTAL STAGE</scope>
    <source>
        <tissue>Embryo</tissue>
    </source>
</reference>
<reference key="2">
    <citation type="journal article" date="2000" name="Science">
        <title>The genome sequence of Drosophila melanogaster.</title>
        <authorList>
            <person name="Adams M.D."/>
            <person name="Celniker S.E."/>
            <person name="Holt R.A."/>
            <person name="Evans C.A."/>
            <person name="Gocayne J.D."/>
            <person name="Amanatides P.G."/>
            <person name="Scherer S.E."/>
            <person name="Li P.W."/>
            <person name="Hoskins R.A."/>
            <person name="Galle R.F."/>
            <person name="George R.A."/>
            <person name="Lewis S.E."/>
            <person name="Richards S."/>
            <person name="Ashburner M."/>
            <person name="Henderson S.N."/>
            <person name="Sutton G.G."/>
            <person name="Wortman J.R."/>
            <person name="Yandell M.D."/>
            <person name="Zhang Q."/>
            <person name="Chen L.X."/>
            <person name="Brandon R.C."/>
            <person name="Rogers Y.-H.C."/>
            <person name="Blazej R.G."/>
            <person name="Champe M."/>
            <person name="Pfeiffer B.D."/>
            <person name="Wan K.H."/>
            <person name="Doyle C."/>
            <person name="Baxter E.G."/>
            <person name="Helt G."/>
            <person name="Nelson C.R."/>
            <person name="Miklos G.L.G."/>
            <person name="Abril J.F."/>
            <person name="Agbayani A."/>
            <person name="An H.-J."/>
            <person name="Andrews-Pfannkoch C."/>
            <person name="Baldwin D."/>
            <person name="Ballew R.M."/>
            <person name="Basu A."/>
            <person name="Baxendale J."/>
            <person name="Bayraktaroglu L."/>
            <person name="Beasley E.M."/>
            <person name="Beeson K.Y."/>
            <person name="Benos P.V."/>
            <person name="Berman B.P."/>
            <person name="Bhandari D."/>
            <person name="Bolshakov S."/>
            <person name="Borkova D."/>
            <person name="Botchan M.R."/>
            <person name="Bouck J."/>
            <person name="Brokstein P."/>
            <person name="Brottier P."/>
            <person name="Burtis K.C."/>
            <person name="Busam D.A."/>
            <person name="Butler H."/>
            <person name="Cadieu E."/>
            <person name="Center A."/>
            <person name="Chandra I."/>
            <person name="Cherry J.M."/>
            <person name="Cawley S."/>
            <person name="Dahlke C."/>
            <person name="Davenport L.B."/>
            <person name="Davies P."/>
            <person name="de Pablos B."/>
            <person name="Delcher A."/>
            <person name="Deng Z."/>
            <person name="Mays A.D."/>
            <person name="Dew I."/>
            <person name="Dietz S.M."/>
            <person name="Dodson K."/>
            <person name="Doup L.E."/>
            <person name="Downes M."/>
            <person name="Dugan-Rocha S."/>
            <person name="Dunkov B.C."/>
            <person name="Dunn P."/>
            <person name="Durbin K.J."/>
            <person name="Evangelista C.C."/>
            <person name="Ferraz C."/>
            <person name="Ferriera S."/>
            <person name="Fleischmann W."/>
            <person name="Fosler C."/>
            <person name="Gabrielian A.E."/>
            <person name="Garg N.S."/>
            <person name="Gelbart W.M."/>
            <person name="Glasser K."/>
            <person name="Glodek A."/>
            <person name="Gong F."/>
            <person name="Gorrell J.H."/>
            <person name="Gu Z."/>
            <person name="Guan P."/>
            <person name="Harris M."/>
            <person name="Harris N.L."/>
            <person name="Harvey D.A."/>
            <person name="Heiman T.J."/>
            <person name="Hernandez J.R."/>
            <person name="Houck J."/>
            <person name="Hostin D."/>
            <person name="Houston K.A."/>
            <person name="Howland T.J."/>
            <person name="Wei M.-H."/>
            <person name="Ibegwam C."/>
            <person name="Jalali M."/>
            <person name="Kalush F."/>
            <person name="Karpen G.H."/>
            <person name="Ke Z."/>
            <person name="Kennison J.A."/>
            <person name="Ketchum K.A."/>
            <person name="Kimmel B.E."/>
            <person name="Kodira C.D."/>
            <person name="Kraft C.L."/>
            <person name="Kravitz S."/>
            <person name="Kulp D."/>
            <person name="Lai Z."/>
            <person name="Lasko P."/>
            <person name="Lei Y."/>
            <person name="Levitsky A.A."/>
            <person name="Li J.H."/>
            <person name="Li Z."/>
            <person name="Liang Y."/>
            <person name="Lin X."/>
            <person name="Liu X."/>
            <person name="Mattei B."/>
            <person name="McIntosh T.C."/>
            <person name="McLeod M.P."/>
            <person name="McPherson D."/>
            <person name="Merkulov G."/>
            <person name="Milshina N.V."/>
            <person name="Mobarry C."/>
            <person name="Morris J."/>
            <person name="Moshrefi A."/>
            <person name="Mount S.M."/>
            <person name="Moy M."/>
            <person name="Murphy B."/>
            <person name="Murphy L."/>
            <person name="Muzny D.M."/>
            <person name="Nelson D.L."/>
            <person name="Nelson D.R."/>
            <person name="Nelson K.A."/>
            <person name="Nixon K."/>
            <person name="Nusskern D.R."/>
            <person name="Pacleb J.M."/>
            <person name="Palazzolo M."/>
            <person name="Pittman G.S."/>
            <person name="Pan S."/>
            <person name="Pollard J."/>
            <person name="Puri V."/>
            <person name="Reese M.G."/>
            <person name="Reinert K."/>
            <person name="Remington K."/>
            <person name="Saunders R.D.C."/>
            <person name="Scheeler F."/>
            <person name="Shen H."/>
            <person name="Shue B.C."/>
            <person name="Siden-Kiamos I."/>
            <person name="Simpson M."/>
            <person name="Skupski M.P."/>
            <person name="Smith T.J."/>
            <person name="Spier E."/>
            <person name="Spradling A.C."/>
            <person name="Stapleton M."/>
            <person name="Strong R."/>
            <person name="Sun E."/>
            <person name="Svirskas R."/>
            <person name="Tector C."/>
            <person name="Turner R."/>
            <person name="Venter E."/>
            <person name="Wang A.H."/>
            <person name="Wang X."/>
            <person name="Wang Z.-Y."/>
            <person name="Wassarman D.A."/>
            <person name="Weinstock G.M."/>
            <person name="Weissenbach J."/>
            <person name="Williams S.M."/>
            <person name="Woodage T."/>
            <person name="Worley K.C."/>
            <person name="Wu D."/>
            <person name="Yang S."/>
            <person name="Yao Q.A."/>
            <person name="Ye J."/>
            <person name="Yeh R.-F."/>
            <person name="Zaveri J.S."/>
            <person name="Zhan M."/>
            <person name="Zhang G."/>
            <person name="Zhao Q."/>
            <person name="Zheng L."/>
            <person name="Zheng X.H."/>
            <person name="Zhong F.N."/>
            <person name="Zhong W."/>
            <person name="Zhou X."/>
            <person name="Zhu S.C."/>
            <person name="Zhu X."/>
            <person name="Smith H.O."/>
            <person name="Gibbs R.A."/>
            <person name="Myers E.W."/>
            <person name="Rubin G.M."/>
            <person name="Venter J.C."/>
        </authorList>
    </citation>
    <scope>NUCLEOTIDE SEQUENCE [LARGE SCALE GENOMIC DNA]</scope>
    <source>
        <strain>Berkeley</strain>
    </source>
</reference>
<reference key="3">
    <citation type="journal article" date="2002" name="Genome Biol.">
        <title>Annotation of the Drosophila melanogaster euchromatic genome: a systematic review.</title>
        <authorList>
            <person name="Misra S."/>
            <person name="Crosby M.A."/>
            <person name="Mungall C.J."/>
            <person name="Matthews B.B."/>
            <person name="Campbell K.S."/>
            <person name="Hradecky P."/>
            <person name="Huang Y."/>
            <person name="Kaminker J.S."/>
            <person name="Millburn G.H."/>
            <person name="Prochnik S.E."/>
            <person name="Smith C.D."/>
            <person name="Tupy J.L."/>
            <person name="Whitfield E.J."/>
            <person name="Bayraktaroglu L."/>
            <person name="Berman B.P."/>
            <person name="Bettencourt B.R."/>
            <person name="Celniker S.E."/>
            <person name="de Grey A.D.N.J."/>
            <person name="Drysdale R.A."/>
            <person name="Harris N.L."/>
            <person name="Richter J."/>
            <person name="Russo S."/>
            <person name="Schroeder A.J."/>
            <person name="Shu S.Q."/>
            <person name="Stapleton M."/>
            <person name="Yamada C."/>
            <person name="Ashburner M."/>
            <person name="Gelbart W.M."/>
            <person name="Rubin G.M."/>
            <person name="Lewis S.E."/>
        </authorList>
    </citation>
    <scope>GENOME REANNOTATION</scope>
    <source>
        <strain>Berkeley</strain>
    </source>
</reference>
<reference key="4">
    <citation type="journal article" date="2002" name="Genome Biol.">
        <title>A Drosophila full-length cDNA resource.</title>
        <authorList>
            <person name="Stapleton M."/>
            <person name="Carlson J.W."/>
            <person name="Brokstein P."/>
            <person name="Yu C."/>
            <person name="Champe M."/>
            <person name="George R.A."/>
            <person name="Guarin H."/>
            <person name="Kronmiller B."/>
            <person name="Pacleb J.M."/>
            <person name="Park S."/>
            <person name="Wan K.H."/>
            <person name="Rubin G.M."/>
            <person name="Celniker S.E."/>
        </authorList>
    </citation>
    <scope>NUCLEOTIDE SEQUENCE [LARGE SCALE MRNA] OF 1-213</scope>
    <source>
        <strain evidence="9">Berkeley</strain>
        <tissue evidence="9">Embryo</tissue>
    </source>
</reference>
<reference key="5">
    <citation type="journal article" date="2004" name="J. Neurosci.">
        <title>The Drosophila receptor guanylyl cyclase Gyc76C is required for semaphorin-1a-plexin A-mediated axonal repulsion.</title>
        <authorList>
            <person name="Ayoob J.C."/>
            <person name="Yu H.H."/>
            <person name="Terman J.R."/>
            <person name="Kolodkin A.L."/>
        </authorList>
    </citation>
    <scope>FUNCTION</scope>
</reference>
<reference key="6">
    <citation type="journal article" date="2023" name="Sci. Rep.">
        <title>Adult expression of Semaphorins and Plexins is essential for motor neuron survival.</title>
        <authorList>
            <person name="Vaikakkara Chithran A."/>
            <person name="Allan D.W."/>
            <person name="O'Connor T.P."/>
        </authorList>
    </citation>
    <scope>FUNCTION</scope>
    <scope>DISRUPTION PHENOTYPE</scope>
</reference>
<evidence type="ECO:0000255" key="1"/>
<evidence type="ECO:0000255" key="2">
    <source>
        <dbReference type="PROSITE-ProRule" id="PRU00352"/>
    </source>
</evidence>
<evidence type="ECO:0000255" key="3">
    <source>
        <dbReference type="PROSITE-ProRule" id="PRU00498"/>
    </source>
</evidence>
<evidence type="ECO:0000256" key="4">
    <source>
        <dbReference type="SAM" id="MobiDB-lite"/>
    </source>
</evidence>
<evidence type="ECO:0000269" key="5">
    <source>
    </source>
</evidence>
<evidence type="ECO:0000269" key="6">
    <source>
    </source>
</evidence>
<evidence type="ECO:0000269" key="7">
    <source>
    </source>
</evidence>
<evidence type="ECO:0000305" key="8"/>
<evidence type="ECO:0000312" key="9">
    <source>
        <dbReference type="EMBL" id="AAM29460.1"/>
    </source>
</evidence>
<evidence type="ECO:0000312" key="10">
    <source>
        <dbReference type="FlyBase" id="FBgn0011259"/>
    </source>
</evidence>